<name>SPAN2_BPT3</name>
<feature type="signal peptide" evidence="2">
    <location>
        <begin position="1"/>
        <end position="50"/>
    </location>
</feature>
<feature type="chain" id="PRO_0000106538" description="Spanin, outer lipoprotein subunit" evidence="2">
    <location>
        <begin position="51"/>
        <end position="83"/>
    </location>
</feature>
<protein>
    <recommendedName>
        <fullName>Spanin, outer lipoprotein subunit</fullName>
        <shortName>o-spanin</shortName>
    </recommendedName>
    <alternativeName>
        <fullName>Gene product 18.7</fullName>
        <shortName>Gp18.7</shortName>
    </alternativeName>
    <alternativeName>
        <fullName>Protein 18.7</fullName>
    </alternativeName>
</protein>
<reference key="1">
    <citation type="journal article" date="1986" name="Virology">
        <title>Cloning and sequencing of the genetic right end of bacteriophage T3 DNA.</title>
        <authorList>
            <person name="Yamada M."/>
            <person name="Fujisawa H."/>
            <person name="Kato H."/>
            <person name="Hamada K."/>
            <person name="Minagawa T."/>
        </authorList>
    </citation>
    <scope>NUCLEOTIDE SEQUENCE [GENOMIC DNA]</scope>
</reference>
<reference key="2">
    <citation type="journal article" date="1986" name="Virology">
        <authorList>
            <person name="Yamada M."/>
            <person name="Fujisawa H."/>
            <person name="Kato H."/>
            <person name="Hamada K."/>
            <person name="Minagawa T."/>
        </authorList>
    </citation>
    <scope>ERRATUM OF PUBMED:3010556</scope>
</reference>
<dbReference type="EMBL" id="M14784">
    <property type="protein sequence ID" value="AAA92527.1"/>
    <property type="molecule type" value="Genomic_DNA"/>
</dbReference>
<dbReference type="PIR" id="E23476">
    <property type="entry name" value="W8BPT3"/>
</dbReference>
<dbReference type="GO" id="GO:0020002">
    <property type="term" value="C:host cell plasma membrane"/>
    <property type="evidence" value="ECO:0007669"/>
    <property type="project" value="UniProtKB-SubCell"/>
</dbReference>
<dbReference type="GO" id="GO:0016020">
    <property type="term" value="C:membrane"/>
    <property type="evidence" value="ECO:0007669"/>
    <property type="project" value="UniProtKB-KW"/>
</dbReference>
<dbReference type="GO" id="GO:0031640">
    <property type="term" value="P:killing of cells of another organism"/>
    <property type="evidence" value="ECO:0007669"/>
    <property type="project" value="UniProtKB-KW"/>
</dbReference>
<dbReference type="GO" id="GO:0019076">
    <property type="term" value="P:viral release from host cell"/>
    <property type="evidence" value="ECO:0007669"/>
    <property type="project" value="InterPro"/>
</dbReference>
<dbReference type="InterPro" id="IPR020130">
    <property type="entry name" value="O-spanin_T7likevirus"/>
</dbReference>
<dbReference type="Pfam" id="PF17531">
    <property type="entry name" value="O_Spanin_T7"/>
    <property type="match status" value="1"/>
</dbReference>
<organismHost>
    <name type="scientific">Escherichia coli</name>
    <dbReference type="NCBI Taxonomy" id="562"/>
</organismHost>
<keyword id="KW-0204">Cytolysis</keyword>
<keyword id="KW-0578">Host cell lysis by virus</keyword>
<keyword id="KW-1033">Host cell outer membrane</keyword>
<keyword id="KW-1043">Host membrane</keyword>
<keyword id="KW-0449">Lipoprotein</keyword>
<keyword id="KW-0472">Membrane</keyword>
<keyword id="KW-0732">Signal</keyword>
<keyword id="KW-1188">Viral release from host cell</keyword>
<accession>P10302</accession>
<organism>
    <name type="scientific">Enterobacteria phage T3</name>
    <name type="common">Bacteriophage T3</name>
    <dbReference type="NCBI Taxonomy" id="10759"/>
    <lineage>
        <taxon>Viruses</taxon>
        <taxon>Duplodnaviria</taxon>
        <taxon>Heunggongvirae</taxon>
        <taxon>Uroviricota</taxon>
        <taxon>Caudoviricetes</taxon>
        <taxon>Autographiviridae</taxon>
        <taxon>Studiervirinae</taxon>
        <taxon>Teetrevirus</taxon>
        <taxon>Teetrevirus T3</taxon>
    </lineage>
</organism>
<proteinExistence type="inferred from homology"/>
<sequence length="83" mass="9393">MSTLRELRLRRALKEQSMKYRLSIKKTLPRWKGALIGLFLICVRTISGSGSESNLPEPPKVSVDSSLMIEPNLTTEMLNVFSQ</sequence>
<comment type="function">
    <text evidence="1">Component of the spanin complex that disrupts the host outer membrane and participates in cell lysis during virus exit. The spanin complex conducts the final step in host lysis by disrupting the outer membrane after holin and endolysin action have permeabilized the inner membrane and degraded the host peptidoglycans. Host outer membrane disruption is possibly due to local fusion between the inner and outer membrane performed by the spanin complex.</text>
</comment>
<comment type="subunit">
    <text evidence="1">Homodimer. Interacts (via C-terminus) with the spanin inner membrane subunit (via C-terminus). Part of the spanin complex which spans the entire periplasmic space. The spanin complex is composed of spanin inner membrane subunit and spanin outer membrane subunit.</text>
</comment>
<comment type="subcellular location">
    <subcellularLocation>
        <location evidence="1">Host cell outer membrane</location>
        <topology evidence="1">Lipid-anchor</topology>
        <orientation evidence="1">Periplasmic side</orientation>
    </subcellularLocation>
</comment>
<comment type="similarity">
    <text evidence="3">Belongs to the T7likevirus o-spanin family.</text>
</comment>
<gene>
    <name type="primary">18.7</name>
</gene>
<evidence type="ECO:0000250" key="1">
    <source>
        <dbReference type="UniProtKB" id="P03788"/>
    </source>
</evidence>
<evidence type="ECO:0000255" key="2"/>
<evidence type="ECO:0000305" key="3"/>